<gene>
    <name type="primary">MT-CYB</name>
    <name type="synonym">COB</name>
    <name type="synonym">CYTB</name>
    <name type="synonym">MTCYB</name>
</gene>
<feature type="chain" id="PRO_0000060551" description="Cytochrome b">
    <location>
        <begin position="1"/>
        <end position="267" status="greater than"/>
    </location>
</feature>
<feature type="transmembrane region" description="Helical" evidence="2">
    <location>
        <begin position="33"/>
        <end position="53"/>
    </location>
</feature>
<feature type="transmembrane region" description="Helical" evidence="2">
    <location>
        <begin position="77"/>
        <end position="98"/>
    </location>
</feature>
<feature type="transmembrane region" description="Helical" evidence="2">
    <location>
        <begin position="113"/>
        <end position="133"/>
    </location>
</feature>
<feature type="transmembrane region" description="Helical" evidence="2">
    <location>
        <begin position="178"/>
        <end position="198"/>
    </location>
</feature>
<feature type="transmembrane region" description="Helical" evidence="2">
    <location>
        <begin position="226"/>
        <end position="246"/>
    </location>
</feature>
<feature type="binding site" description="axial binding residue" evidence="2">
    <location>
        <position position="83"/>
    </location>
    <ligand>
        <name>heme b</name>
        <dbReference type="ChEBI" id="CHEBI:60344"/>
        <label>b562</label>
    </ligand>
    <ligandPart>
        <name>Fe</name>
        <dbReference type="ChEBI" id="CHEBI:18248"/>
    </ligandPart>
</feature>
<feature type="binding site" description="axial binding residue" evidence="2">
    <location>
        <position position="97"/>
    </location>
    <ligand>
        <name>heme b</name>
        <dbReference type="ChEBI" id="CHEBI:60344"/>
        <label>b566</label>
    </ligand>
    <ligandPart>
        <name>Fe</name>
        <dbReference type="ChEBI" id="CHEBI:18248"/>
    </ligandPart>
</feature>
<feature type="binding site" description="axial binding residue" evidence="2">
    <location>
        <position position="182"/>
    </location>
    <ligand>
        <name>heme b</name>
        <dbReference type="ChEBI" id="CHEBI:60344"/>
        <label>b562</label>
    </ligand>
    <ligandPart>
        <name>Fe</name>
        <dbReference type="ChEBI" id="CHEBI:18248"/>
    </ligandPart>
</feature>
<feature type="binding site" description="axial binding residue" evidence="2">
    <location>
        <position position="196"/>
    </location>
    <ligand>
        <name>heme b</name>
        <dbReference type="ChEBI" id="CHEBI:60344"/>
        <label>b566</label>
    </ligand>
    <ligandPart>
        <name>Fe</name>
        <dbReference type="ChEBI" id="CHEBI:18248"/>
    </ligandPart>
</feature>
<feature type="binding site" evidence="2">
    <location>
        <position position="201"/>
    </location>
    <ligand>
        <name>a ubiquinone</name>
        <dbReference type="ChEBI" id="CHEBI:16389"/>
    </ligand>
</feature>
<feature type="non-terminal residue">
    <location>
        <position position="267"/>
    </location>
</feature>
<name>CYB_ABROL</name>
<comment type="function">
    <text evidence="2">Component of the ubiquinol-cytochrome c reductase complex (complex III or cytochrome b-c1 complex) that is part of the mitochondrial respiratory chain. The b-c1 complex mediates electron transfer from ubiquinol to cytochrome c. Contributes to the generation of a proton gradient across the mitochondrial membrane that is then used for ATP synthesis.</text>
</comment>
<comment type="cofactor">
    <cofactor evidence="2">
        <name>heme b</name>
        <dbReference type="ChEBI" id="CHEBI:60344"/>
    </cofactor>
    <text evidence="2">Binds 2 heme b groups non-covalently.</text>
</comment>
<comment type="subunit">
    <text evidence="2">The cytochrome bc1 complex contains 11 subunits: 3 respiratory subunits (MT-CYB, CYC1 and UQCRFS1), 2 core proteins (UQCRC1 and UQCRC2) and 6 low-molecular weight proteins (UQCRH/QCR6, UQCRB/QCR7, UQCRQ/QCR8, UQCR10/QCR9, UQCR11/QCR10 and a cleavage product of UQCRFS1). This cytochrome bc1 complex then forms a dimer.</text>
</comment>
<comment type="subcellular location">
    <subcellularLocation>
        <location evidence="2">Mitochondrion inner membrane</location>
        <topology evidence="2">Multi-pass membrane protein</topology>
    </subcellularLocation>
</comment>
<comment type="miscellaneous">
    <text evidence="1">Heme 1 (or BL or b562) is low-potential and absorbs at about 562 nm, and heme 2 (or BH or b566) is high-potential and absorbs at about 566 nm.</text>
</comment>
<comment type="similarity">
    <text evidence="3 4">Belongs to the cytochrome b family.</text>
</comment>
<comment type="caution">
    <text evidence="2">The full-length protein contains only eight transmembrane helices, not nine as predicted by bioinformatics tools.</text>
</comment>
<accession>P48520</accession>
<protein>
    <recommendedName>
        <fullName>Cytochrome b</fullName>
    </recommendedName>
    <alternativeName>
        <fullName>Complex III subunit 3</fullName>
    </alternativeName>
    <alternativeName>
        <fullName>Complex III subunit III</fullName>
    </alternativeName>
    <alternativeName>
        <fullName>Cytochrome b-c1 complex subunit 3</fullName>
    </alternativeName>
    <alternativeName>
        <fullName>Ubiquinol-cytochrome-c reductase complex cytochrome b subunit</fullName>
    </alternativeName>
</protein>
<keyword id="KW-0249">Electron transport</keyword>
<keyword id="KW-0349">Heme</keyword>
<keyword id="KW-0408">Iron</keyword>
<keyword id="KW-0472">Membrane</keyword>
<keyword id="KW-0479">Metal-binding</keyword>
<keyword id="KW-0496">Mitochondrion</keyword>
<keyword id="KW-0999">Mitochondrion inner membrane</keyword>
<keyword id="KW-0679">Respiratory chain</keyword>
<keyword id="KW-0812">Transmembrane</keyword>
<keyword id="KW-1133">Transmembrane helix</keyword>
<keyword id="KW-0813">Transport</keyword>
<keyword id="KW-0830">Ubiquinone</keyword>
<proteinExistence type="inferred from homology"/>
<geneLocation type="mitochondrion"/>
<sequence length="267" mass="30069">MTIMRKNHPLLKIINHSFIDLPTPSNISSWWNFGSLLGICLMIQILTGLFLAMHYTSDTATAFSSVTHICRDVNYGWLIRYLHANGASMFFICLFIHVGRGIYYGSYMLSETWNIGIILFLTTMATAFVGYVLPWGQMSFWGATVITNLLSAIPYIGTSLVEWIWGGFSVDKATLTRFFAFHFILPFIITAFVLVHLLFLHETGSNNPSGLNSNSDKIPFHPYYTIKDLLGVILLLMVLMILVLFFPDVLGDPDNYTPANPLNTPAH</sequence>
<organism>
    <name type="scientific">Abrothrix olivaceus</name>
    <name type="common">Olive grass mouse</name>
    <name type="synonym">Akodon olivaceus</name>
    <dbReference type="NCBI Taxonomy" id="29098"/>
    <lineage>
        <taxon>Eukaryota</taxon>
        <taxon>Metazoa</taxon>
        <taxon>Chordata</taxon>
        <taxon>Craniata</taxon>
        <taxon>Vertebrata</taxon>
        <taxon>Euteleostomi</taxon>
        <taxon>Mammalia</taxon>
        <taxon>Eutheria</taxon>
        <taxon>Euarchontoglires</taxon>
        <taxon>Glires</taxon>
        <taxon>Rodentia</taxon>
        <taxon>Myomorpha</taxon>
        <taxon>Muroidea</taxon>
        <taxon>Cricetidae</taxon>
        <taxon>Sigmodontinae</taxon>
        <taxon>Abrothrix</taxon>
    </lineage>
</organism>
<dbReference type="EMBL" id="U03532">
    <property type="protein sequence ID" value="AAD12558.1"/>
    <property type="molecule type" value="Genomic_DNA"/>
</dbReference>
<dbReference type="SMR" id="P48520"/>
<dbReference type="GO" id="GO:0005743">
    <property type="term" value="C:mitochondrial inner membrane"/>
    <property type="evidence" value="ECO:0007669"/>
    <property type="project" value="UniProtKB-SubCell"/>
</dbReference>
<dbReference type="GO" id="GO:0046872">
    <property type="term" value="F:metal ion binding"/>
    <property type="evidence" value="ECO:0007669"/>
    <property type="project" value="UniProtKB-KW"/>
</dbReference>
<dbReference type="GO" id="GO:0008121">
    <property type="term" value="F:ubiquinol-cytochrome-c reductase activity"/>
    <property type="evidence" value="ECO:0007669"/>
    <property type="project" value="TreeGrafter"/>
</dbReference>
<dbReference type="GO" id="GO:0006122">
    <property type="term" value="P:mitochondrial electron transport, ubiquinol to cytochrome c"/>
    <property type="evidence" value="ECO:0007669"/>
    <property type="project" value="TreeGrafter"/>
</dbReference>
<dbReference type="CDD" id="cd00284">
    <property type="entry name" value="Cytochrome_b_N"/>
    <property type="match status" value="1"/>
</dbReference>
<dbReference type="Gene3D" id="1.20.810.10">
    <property type="entry name" value="Cytochrome Bc1 Complex, Chain C"/>
    <property type="match status" value="1"/>
</dbReference>
<dbReference type="InterPro" id="IPR005798">
    <property type="entry name" value="Cyt_b/b6_C"/>
</dbReference>
<dbReference type="InterPro" id="IPR005797">
    <property type="entry name" value="Cyt_b/b6_N"/>
</dbReference>
<dbReference type="InterPro" id="IPR027387">
    <property type="entry name" value="Cytb/b6-like_sf"/>
</dbReference>
<dbReference type="InterPro" id="IPR048259">
    <property type="entry name" value="Cytochrome_b_N_euk/bac"/>
</dbReference>
<dbReference type="InterPro" id="IPR016174">
    <property type="entry name" value="Di-haem_cyt_TM"/>
</dbReference>
<dbReference type="PANTHER" id="PTHR19271">
    <property type="entry name" value="CYTOCHROME B"/>
    <property type="match status" value="1"/>
</dbReference>
<dbReference type="PANTHER" id="PTHR19271:SF16">
    <property type="entry name" value="CYTOCHROME B"/>
    <property type="match status" value="1"/>
</dbReference>
<dbReference type="Pfam" id="PF00033">
    <property type="entry name" value="Cytochrome_B"/>
    <property type="match status" value="1"/>
</dbReference>
<dbReference type="SUPFAM" id="SSF81342">
    <property type="entry name" value="Transmembrane di-heme cytochromes"/>
    <property type="match status" value="1"/>
</dbReference>
<dbReference type="PROSITE" id="PS51003">
    <property type="entry name" value="CYTB_CTER"/>
    <property type="match status" value="1"/>
</dbReference>
<dbReference type="PROSITE" id="PS51002">
    <property type="entry name" value="CYTB_NTER"/>
    <property type="match status" value="1"/>
</dbReference>
<reference key="1">
    <citation type="journal article" date="1993" name="Biol. J. Linn. Soc. Lond.">
        <title>The diversification of South American murid rodents: evidence from mitochondrial DNA sequence data for the akodontine tribe.</title>
        <authorList>
            <person name="Smith M.F."/>
            <person name="Patton J.L."/>
        </authorList>
    </citation>
    <scope>NUCLEOTIDE SEQUENCE [GENOMIC DNA]</scope>
    <source>
        <strain>Isolate MVZ 155753</strain>
        <tissue>Liver</tissue>
    </source>
</reference>
<evidence type="ECO:0000250" key="1"/>
<evidence type="ECO:0000250" key="2">
    <source>
        <dbReference type="UniProtKB" id="P00157"/>
    </source>
</evidence>
<evidence type="ECO:0000255" key="3">
    <source>
        <dbReference type="PROSITE-ProRule" id="PRU00967"/>
    </source>
</evidence>
<evidence type="ECO:0000255" key="4">
    <source>
        <dbReference type="PROSITE-ProRule" id="PRU00968"/>
    </source>
</evidence>